<evidence type="ECO:0000255" key="1">
    <source>
        <dbReference type="HAMAP-Rule" id="MF_01337"/>
    </source>
</evidence>
<evidence type="ECO:0000305" key="2"/>
<organism>
    <name type="scientific">Dictyoglomus turgidum (strain DSM 6724 / Z-1310)</name>
    <dbReference type="NCBI Taxonomy" id="515635"/>
    <lineage>
        <taxon>Bacteria</taxon>
        <taxon>Pseudomonadati</taxon>
        <taxon>Dictyoglomota</taxon>
        <taxon>Dictyoglomia</taxon>
        <taxon>Dictyoglomales</taxon>
        <taxon>Dictyoglomaceae</taxon>
        <taxon>Dictyoglomus</taxon>
    </lineage>
</organism>
<sequence length="122" mass="13883">MIIKRSRKELRRIRHLRIRKKITGTPERPRLAVYKSLRYIYAQIIDDTKGHTLVAASSLEKELRSQLKSTKNIEAAKLVGEVIAKRALEKGIKRVVFDRGGFLYHGKVKALADSARAAGLEF</sequence>
<dbReference type="EMBL" id="CP001251">
    <property type="protein sequence ID" value="ACK42277.1"/>
    <property type="molecule type" value="Genomic_DNA"/>
</dbReference>
<dbReference type="RefSeq" id="WP_012583361.1">
    <property type="nucleotide sequence ID" value="NC_011661.1"/>
</dbReference>
<dbReference type="RefSeq" id="YP_002352891.1">
    <property type="nucleotide sequence ID" value="NC_011661.1"/>
</dbReference>
<dbReference type="SMR" id="B8E1E9"/>
<dbReference type="FunCoup" id="B8E1E9">
    <property type="interactions" value="405"/>
</dbReference>
<dbReference type="STRING" id="515635.Dtur_0997"/>
<dbReference type="EnsemblBacteria" id="ACK42277">
    <property type="protein sequence ID" value="ACK42277"/>
    <property type="gene ID" value="Dtur_0997"/>
</dbReference>
<dbReference type="KEGG" id="dtu:Dtur_0997"/>
<dbReference type="PATRIC" id="fig|515635.4.peg.1034"/>
<dbReference type="eggNOG" id="COG0256">
    <property type="taxonomic scope" value="Bacteria"/>
</dbReference>
<dbReference type="HOGENOM" id="CLU_098841_0_1_0"/>
<dbReference type="InParanoid" id="B8E1E9"/>
<dbReference type="OrthoDB" id="9810939at2"/>
<dbReference type="Proteomes" id="UP000007719">
    <property type="component" value="Chromosome"/>
</dbReference>
<dbReference type="GO" id="GO:0022625">
    <property type="term" value="C:cytosolic large ribosomal subunit"/>
    <property type="evidence" value="ECO:0000318"/>
    <property type="project" value="GO_Central"/>
</dbReference>
<dbReference type="GO" id="GO:0008097">
    <property type="term" value="F:5S rRNA binding"/>
    <property type="evidence" value="ECO:0000318"/>
    <property type="project" value="GO_Central"/>
</dbReference>
<dbReference type="GO" id="GO:0003735">
    <property type="term" value="F:structural constituent of ribosome"/>
    <property type="evidence" value="ECO:0007669"/>
    <property type="project" value="InterPro"/>
</dbReference>
<dbReference type="GO" id="GO:0006412">
    <property type="term" value="P:translation"/>
    <property type="evidence" value="ECO:0007669"/>
    <property type="project" value="UniProtKB-UniRule"/>
</dbReference>
<dbReference type="CDD" id="cd00432">
    <property type="entry name" value="Ribosomal_L18_L5e"/>
    <property type="match status" value="1"/>
</dbReference>
<dbReference type="FunFam" id="3.30.420.100:FF:000001">
    <property type="entry name" value="50S ribosomal protein L18"/>
    <property type="match status" value="1"/>
</dbReference>
<dbReference type="Gene3D" id="3.30.420.100">
    <property type="match status" value="1"/>
</dbReference>
<dbReference type="HAMAP" id="MF_01337_B">
    <property type="entry name" value="Ribosomal_uL18_B"/>
    <property type="match status" value="1"/>
</dbReference>
<dbReference type="InterPro" id="IPR004389">
    <property type="entry name" value="Ribosomal_uL18_bac-type"/>
</dbReference>
<dbReference type="InterPro" id="IPR005484">
    <property type="entry name" value="Ribosomal_uL18_bac/euk"/>
</dbReference>
<dbReference type="NCBIfam" id="TIGR00060">
    <property type="entry name" value="L18_bact"/>
    <property type="match status" value="1"/>
</dbReference>
<dbReference type="PANTHER" id="PTHR12899">
    <property type="entry name" value="39S RIBOSOMAL PROTEIN L18, MITOCHONDRIAL"/>
    <property type="match status" value="1"/>
</dbReference>
<dbReference type="PANTHER" id="PTHR12899:SF3">
    <property type="entry name" value="LARGE RIBOSOMAL SUBUNIT PROTEIN UL18M"/>
    <property type="match status" value="1"/>
</dbReference>
<dbReference type="Pfam" id="PF00861">
    <property type="entry name" value="Ribosomal_L18p"/>
    <property type="match status" value="1"/>
</dbReference>
<dbReference type="SUPFAM" id="SSF53137">
    <property type="entry name" value="Translational machinery components"/>
    <property type="match status" value="1"/>
</dbReference>
<reference key="1">
    <citation type="journal article" date="2016" name="Front. Microbiol.">
        <title>The complete genome sequence of hyperthermophile Dictyoglomus turgidum DSM 6724 reveals a specialized carbohydrate fermentor.</title>
        <authorList>
            <person name="Brumm P.J."/>
            <person name="Gowda K."/>
            <person name="Robb F.T."/>
            <person name="Mead D.A."/>
        </authorList>
    </citation>
    <scope>NUCLEOTIDE SEQUENCE [LARGE SCALE GENOMIC DNA]</scope>
    <source>
        <strain>DSM 6724 / Z-1310</strain>
    </source>
</reference>
<accession>B8E1E9</accession>
<name>RL18_DICTD</name>
<protein>
    <recommendedName>
        <fullName evidence="1">Large ribosomal subunit protein uL18</fullName>
    </recommendedName>
    <alternativeName>
        <fullName evidence="2">50S ribosomal protein L18</fullName>
    </alternativeName>
</protein>
<proteinExistence type="inferred from homology"/>
<feature type="chain" id="PRO_1000142655" description="Large ribosomal subunit protein uL18">
    <location>
        <begin position="1"/>
        <end position="122"/>
    </location>
</feature>
<comment type="function">
    <text evidence="1">This is one of the proteins that bind and probably mediate the attachment of the 5S RNA into the large ribosomal subunit, where it forms part of the central protuberance.</text>
</comment>
<comment type="subunit">
    <text evidence="1">Part of the 50S ribosomal subunit; part of the 5S rRNA/L5/L18/L25 subcomplex. Contacts the 5S and 23S rRNAs.</text>
</comment>
<comment type="similarity">
    <text evidence="1">Belongs to the universal ribosomal protein uL18 family.</text>
</comment>
<gene>
    <name evidence="1" type="primary">rplR</name>
    <name type="ordered locus">Dtur_0997</name>
</gene>
<keyword id="KW-1185">Reference proteome</keyword>
<keyword id="KW-0687">Ribonucleoprotein</keyword>
<keyword id="KW-0689">Ribosomal protein</keyword>
<keyword id="KW-0694">RNA-binding</keyword>
<keyword id="KW-0699">rRNA-binding</keyword>